<organism>
    <name type="scientific">Salmonella paratyphi A (strain ATCC 9150 / SARB42)</name>
    <dbReference type="NCBI Taxonomy" id="295319"/>
    <lineage>
        <taxon>Bacteria</taxon>
        <taxon>Pseudomonadati</taxon>
        <taxon>Pseudomonadota</taxon>
        <taxon>Gammaproteobacteria</taxon>
        <taxon>Enterobacterales</taxon>
        <taxon>Enterobacteriaceae</taxon>
        <taxon>Salmonella</taxon>
    </lineage>
</organism>
<evidence type="ECO:0000255" key="1">
    <source>
        <dbReference type="HAMAP-Rule" id="MF_00463"/>
    </source>
</evidence>
<protein>
    <recommendedName>
        <fullName evidence="1">Ion-translocating oxidoreductase complex subunit B</fullName>
        <ecNumber evidence="1">7.-.-.-</ecNumber>
    </recommendedName>
    <alternativeName>
        <fullName evidence="1">Rsx electron transport complex subunit B</fullName>
    </alternativeName>
</protein>
<accession>Q5PIC0</accession>
<feature type="chain" id="PRO_1000013651" description="Ion-translocating oxidoreductase complex subunit B">
    <location>
        <begin position="1"/>
        <end position="192"/>
    </location>
</feature>
<feature type="domain" description="4Fe-4S" evidence="1">
    <location>
        <begin position="32"/>
        <end position="91"/>
    </location>
</feature>
<feature type="domain" description="4Fe-4S ferredoxin-type 1" evidence="1">
    <location>
        <begin position="108"/>
        <end position="137"/>
    </location>
</feature>
<feature type="domain" description="4Fe-4S ferredoxin-type 2" evidence="1">
    <location>
        <begin position="138"/>
        <end position="167"/>
    </location>
</feature>
<feature type="region of interest" description="Hydrophobic" evidence="1">
    <location>
        <begin position="1"/>
        <end position="26"/>
    </location>
</feature>
<feature type="binding site" evidence="1">
    <location>
        <position position="49"/>
    </location>
    <ligand>
        <name>[4Fe-4S] cluster</name>
        <dbReference type="ChEBI" id="CHEBI:49883"/>
        <label>1</label>
    </ligand>
</feature>
<feature type="binding site" evidence="1">
    <location>
        <position position="52"/>
    </location>
    <ligand>
        <name>[4Fe-4S] cluster</name>
        <dbReference type="ChEBI" id="CHEBI:49883"/>
        <label>1</label>
    </ligand>
</feature>
<feature type="binding site" evidence="1">
    <location>
        <position position="57"/>
    </location>
    <ligand>
        <name>[4Fe-4S] cluster</name>
        <dbReference type="ChEBI" id="CHEBI:49883"/>
        <label>1</label>
    </ligand>
</feature>
<feature type="binding site" evidence="1">
    <location>
        <position position="74"/>
    </location>
    <ligand>
        <name>[4Fe-4S] cluster</name>
        <dbReference type="ChEBI" id="CHEBI:49883"/>
        <label>1</label>
    </ligand>
</feature>
<feature type="binding site" evidence="1">
    <location>
        <position position="117"/>
    </location>
    <ligand>
        <name>[4Fe-4S] cluster</name>
        <dbReference type="ChEBI" id="CHEBI:49883"/>
        <label>2</label>
    </ligand>
</feature>
<feature type="binding site" evidence="1">
    <location>
        <position position="120"/>
    </location>
    <ligand>
        <name>[4Fe-4S] cluster</name>
        <dbReference type="ChEBI" id="CHEBI:49883"/>
        <label>2</label>
    </ligand>
</feature>
<feature type="binding site" evidence="1">
    <location>
        <position position="123"/>
    </location>
    <ligand>
        <name>[4Fe-4S] cluster</name>
        <dbReference type="ChEBI" id="CHEBI:49883"/>
        <label>2</label>
    </ligand>
</feature>
<feature type="binding site" evidence="1">
    <location>
        <position position="127"/>
    </location>
    <ligand>
        <name>[4Fe-4S] cluster</name>
        <dbReference type="ChEBI" id="CHEBI:49883"/>
        <label>3</label>
    </ligand>
</feature>
<feature type="binding site" evidence="1">
    <location>
        <position position="147"/>
    </location>
    <ligand>
        <name>[4Fe-4S] cluster</name>
        <dbReference type="ChEBI" id="CHEBI:49883"/>
        <label>3</label>
    </ligand>
</feature>
<feature type="binding site" evidence="1">
    <location>
        <position position="150"/>
    </location>
    <ligand>
        <name>[4Fe-4S] cluster</name>
        <dbReference type="ChEBI" id="CHEBI:49883"/>
        <label>3</label>
    </ligand>
</feature>
<feature type="binding site" evidence="1">
    <location>
        <position position="153"/>
    </location>
    <ligand>
        <name>[4Fe-4S] cluster</name>
        <dbReference type="ChEBI" id="CHEBI:49883"/>
        <label>3</label>
    </ligand>
</feature>
<feature type="binding site" evidence="1">
    <location>
        <position position="157"/>
    </location>
    <ligand>
        <name>[4Fe-4S] cluster</name>
        <dbReference type="ChEBI" id="CHEBI:49883"/>
        <label>2</label>
    </ligand>
</feature>
<reference key="1">
    <citation type="journal article" date="2004" name="Nat. Genet.">
        <title>Comparison of genome degradation in Paratyphi A and Typhi, human-restricted serovars of Salmonella enterica that cause typhoid.</title>
        <authorList>
            <person name="McClelland M."/>
            <person name="Sanderson K.E."/>
            <person name="Clifton S.W."/>
            <person name="Latreille P."/>
            <person name="Porwollik S."/>
            <person name="Sabo A."/>
            <person name="Meyer R."/>
            <person name="Bieri T."/>
            <person name="Ozersky P."/>
            <person name="McLellan M."/>
            <person name="Harkins C.R."/>
            <person name="Wang C."/>
            <person name="Nguyen C."/>
            <person name="Berghoff A."/>
            <person name="Elliott G."/>
            <person name="Kohlberg S."/>
            <person name="Strong C."/>
            <person name="Du F."/>
            <person name="Carter J."/>
            <person name="Kremizki C."/>
            <person name="Layman D."/>
            <person name="Leonard S."/>
            <person name="Sun H."/>
            <person name="Fulton L."/>
            <person name="Nash W."/>
            <person name="Miner T."/>
            <person name="Minx P."/>
            <person name="Delehaunty K."/>
            <person name="Fronick C."/>
            <person name="Magrini V."/>
            <person name="Nhan M."/>
            <person name="Warren W."/>
            <person name="Florea L."/>
            <person name="Spieth J."/>
            <person name="Wilson R.K."/>
        </authorList>
    </citation>
    <scope>NUCLEOTIDE SEQUENCE [LARGE SCALE GENOMIC DNA]</scope>
    <source>
        <strain>ATCC 9150 / SARB42</strain>
    </source>
</reference>
<keyword id="KW-0004">4Fe-4S</keyword>
<keyword id="KW-0997">Cell inner membrane</keyword>
<keyword id="KW-1003">Cell membrane</keyword>
<keyword id="KW-0249">Electron transport</keyword>
<keyword id="KW-0408">Iron</keyword>
<keyword id="KW-0411">Iron-sulfur</keyword>
<keyword id="KW-0472">Membrane</keyword>
<keyword id="KW-0479">Metal-binding</keyword>
<keyword id="KW-0677">Repeat</keyword>
<keyword id="KW-1278">Translocase</keyword>
<keyword id="KW-0813">Transport</keyword>
<comment type="function">
    <text evidence="1">Part of a membrane-bound complex that couples electron transfer with translocation of ions across the membrane. Required to maintain the reduced state of SoxR.</text>
</comment>
<comment type="cofactor">
    <cofactor evidence="1">
        <name>[4Fe-4S] cluster</name>
        <dbReference type="ChEBI" id="CHEBI:49883"/>
    </cofactor>
    <text evidence="1">Binds 3 [4Fe-4S] clusters.</text>
</comment>
<comment type="subunit">
    <text evidence="1">The complex is composed of six subunits: RsxA, RsxB, RsxC, RsxD, RsxE and RsxG.</text>
</comment>
<comment type="subcellular location">
    <subcellularLocation>
        <location evidence="1">Cell inner membrane</location>
    </subcellularLocation>
</comment>
<comment type="similarity">
    <text evidence="1">Belongs to the 4Fe4S bacterial-type ferredoxin family. RnfB subfamily.</text>
</comment>
<dbReference type="EC" id="7.-.-.-" evidence="1"/>
<dbReference type="EMBL" id="CP000026">
    <property type="protein sequence ID" value="AAV77336.1"/>
    <property type="molecule type" value="Genomic_DNA"/>
</dbReference>
<dbReference type="RefSeq" id="WP_001092600.1">
    <property type="nucleotide sequence ID" value="NC_006511.1"/>
</dbReference>
<dbReference type="SMR" id="Q5PIC0"/>
<dbReference type="KEGG" id="spt:SPA1395"/>
<dbReference type="HOGENOM" id="CLU_063448_2_0_6"/>
<dbReference type="Proteomes" id="UP000008185">
    <property type="component" value="Chromosome"/>
</dbReference>
<dbReference type="GO" id="GO:0005886">
    <property type="term" value="C:plasma membrane"/>
    <property type="evidence" value="ECO:0007669"/>
    <property type="project" value="UniProtKB-SubCell"/>
</dbReference>
<dbReference type="GO" id="GO:0051539">
    <property type="term" value="F:4 iron, 4 sulfur cluster binding"/>
    <property type="evidence" value="ECO:0007669"/>
    <property type="project" value="UniProtKB-UniRule"/>
</dbReference>
<dbReference type="GO" id="GO:0009055">
    <property type="term" value="F:electron transfer activity"/>
    <property type="evidence" value="ECO:0007669"/>
    <property type="project" value="InterPro"/>
</dbReference>
<dbReference type="GO" id="GO:0046872">
    <property type="term" value="F:metal ion binding"/>
    <property type="evidence" value="ECO:0007669"/>
    <property type="project" value="UniProtKB-KW"/>
</dbReference>
<dbReference type="GO" id="GO:0022900">
    <property type="term" value="P:electron transport chain"/>
    <property type="evidence" value="ECO:0007669"/>
    <property type="project" value="UniProtKB-UniRule"/>
</dbReference>
<dbReference type="FunFam" id="1.10.15.40:FF:000001">
    <property type="entry name" value="Ion-translocating oxidoreductase complex subunit B"/>
    <property type="match status" value="1"/>
</dbReference>
<dbReference type="Gene3D" id="3.30.70.20">
    <property type="match status" value="1"/>
</dbReference>
<dbReference type="Gene3D" id="1.10.15.40">
    <property type="entry name" value="Electron transport complex subunit B, putative Fe-S cluster"/>
    <property type="match status" value="1"/>
</dbReference>
<dbReference type="HAMAP" id="MF_00463">
    <property type="entry name" value="RsxB_RnfB"/>
    <property type="match status" value="1"/>
</dbReference>
<dbReference type="InterPro" id="IPR007202">
    <property type="entry name" value="4Fe-4S_dom"/>
</dbReference>
<dbReference type="InterPro" id="IPR017896">
    <property type="entry name" value="4Fe4S_Fe-S-bd"/>
</dbReference>
<dbReference type="InterPro" id="IPR017900">
    <property type="entry name" value="4Fe4S_Fe_S_CS"/>
</dbReference>
<dbReference type="InterPro" id="IPR050395">
    <property type="entry name" value="4Fe4S_Ferredoxin_RnfB"/>
</dbReference>
<dbReference type="InterPro" id="IPR010207">
    <property type="entry name" value="Elect_transpt_cplx_RnfB/RsxB"/>
</dbReference>
<dbReference type="InterPro" id="IPR016463">
    <property type="entry name" value="RnfB/RsxB_Proteobac"/>
</dbReference>
<dbReference type="NCBIfam" id="NF003475">
    <property type="entry name" value="PRK05113.1"/>
    <property type="match status" value="1"/>
</dbReference>
<dbReference type="NCBIfam" id="TIGR01944">
    <property type="entry name" value="rnfB"/>
    <property type="match status" value="1"/>
</dbReference>
<dbReference type="PANTHER" id="PTHR43560">
    <property type="entry name" value="ION-TRANSLOCATING OXIDOREDUCTASE COMPLEX SUBUNIT B"/>
    <property type="match status" value="1"/>
</dbReference>
<dbReference type="PANTHER" id="PTHR43560:SF1">
    <property type="entry name" value="ION-TRANSLOCATING OXIDOREDUCTASE COMPLEX SUBUNIT B"/>
    <property type="match status" value="1"/>
</dbReference>
<dbReference type="Pfam" id="PF14697">
    <property type="entry name" value="Fer4_21"/>
    <property type="match status" value="1"/>
</dbReference>
<dbReference type="Pfam" id="PF04060">
    <property type="entry name" value="FeS"/>
    <property type="match status" value="1"/>
</dbReference>
<dbReference type="PIRSF" id="PIRSF005784">
    <property type="entry name" value="Elect_transpt_RnfB"/>
    <property type="match status" value="1"/>
</dbReference>
<dbReference type="SUPFAM" id="SSF54862">
    <property type="entry name" value="4Fe-4S ferredoxins"/>
    <property type="match status" value="1"/>
</dbReference>
<dbReference type="PROSITE" id="PS51656">
    <property type="entry name" value="4FE4S"/>
    <property type="match status" value="1"/>
</dbReference>
<dbReference type="PROSITE" id="PS00198">
    <property type="entry name" value="4FE4S_FER_1"/>
    <property type="match status" value="2"/>
</dbReference>
<dbReference type="PROSITE" id="PS51379">
    <property type="entry name" value="4FE4S_FER_2"/>
    <property type="match status" value="2"/>
</dbReference>
<sequence length="192" mass="20677">MNTIWIAVGALTLLGLVFGAILGYASRRFAVEDDPVVEKIDAILPQSQCGQCGYPGCRPYAEAVGLQGEKINRCAPGGEAVMLKMAELLNVEPQPCDGEEQQAAPVRMLAVIDENNCIGCTKCIQACPVDAIVGATRAMHTVMSDLCTGCNLCVDPCPTHCIELRPVNETPDSWKWDLNTIPVRIIPVEQHA</sequence>
<gene>
    <name evidence="1" type="primary">rsxB</name>
    <name type="ordered locus">SPA1395</name>
</gene>
<proteinExistence type="inferred from homology"/>
<name>RSXB_SALPA</name>